<protein>
    <recommendedName>
        <fullName evidence="2">Phosphoribosylamine--glycine ligase</fullName>
        <ecNumber evidence="2">6.3.4.13</ecNumber>
    </recommendedName>
    <alternativeName>
        <fullName evidence="2">GARS</fullName>
    </alternativeName>
    <alternativeName>
        <fullName evidence="2">Glycinamide ribonucleotide synthetase</fullName>
    </alternativeName>
    <alternativeName>
        <fullName evidence="2">Phosphoribosylglycinamide synthetase</fullName>
    </alternativeName>
</protein>
<evidence type="ECO:0000250" key="1"/>
<evidence type="ECO:0000255" key="2">
    <source>
        <dbReference type="HAMAP-Rule" id="MF_00138"/>
    </source>
</evidence>
<comment type="catalytic activity">
    <reaction evidence="2">
        <text>5-phospho-beta-D-ribosylamine + glycine + ATP = N(1)-(5-phospho-beta-D-ribosyl)glycinamide + ADP + phosphate + H(+)</text>
        <dbReference type="Rhea" id="RHEA:17453"/>
        <dbReference type="ChEBI" id="CHEBI:15378"/>
        <dbReference type="ChEBI" id="CHEBI:30616"/>
        <dbReference type="ChEBI" id="CHEBI:43474"/>
        <dbReference type="ChEBI" id="CHEBI:57305"/>
        <dbReference type="ChEBI" id="CHEBI:58681"/>
        <dbReference type="ChEBI" id="CHEBI:143788"/>
        <dbReference type="ChEBI" id="CHEBI:456216"/>
        <dbReference type="EC" id="6.3.4.13"/>
    </reaction>
</comment>
<comment type="cofactor">
    <cofactor evidence="1">
        <name>Mg(2+)</name>
        <dbReference type="ChEBI" id="CHEBI:18420"/>
    </cofactor>
    <cofactor evidence="1">
        <name>Mn(2+)</name>
        <dbReference type="ChEBI" id="CHEBI:29035"/>
    </cofactor>
    <text evidence="1">Binds 1 Mg(2+) or Mn(2+) ion per subunit.</text>
</comment>
<comment type="pathway">
    <text evidence="2">Purine metabolism; IMP biosynthesis via de novo pathway; N(1)-(5-phospho-D-ribosyl)glycinamide from 5-phospho-alpha-D-ribose 1-diphosphate: step 2/2.</text>
</comment>
<comment type="similarity">
    <text evidence="2">Belongs to the GARS family.</text>
</comment>
<sequence length="417" mass="46436">MKVLVVGGGGREHAIVHKLSQSDRVEKIYCAPGNAGIGQLAECVNISVEEIEKLKEFALQNKIDITIVGPELPLVEGIVDEFERTGLKIFGPSKKAAMIEGSKYFAKQIMAKYEIPTGRFKAFDRYQEALKFLKETWYPVVIKADGLAQGKGVFIVRDFIEAKEVLDLMMKKRVFGPSGDIVIVEEMLYGKEASIFAFVDGENVLTMMTAMDYKKVYEKDEGPNTGGMGSIAPNPHIDKKTLNEIEEKILKPVVYALKKEGIVYKGVLYAGLMLTKEGPKVLEFNARFGDPETQAILPLLKTDFLEIIEATLEGKLKNLKLEWEDKKAVCVIAASKGYPGEYKKGFEIRGLEEVKEAFVYHAGTSFKDGKIVTSGGRVFGIVALGDSYKEAREIAYREIEKISFEGIYYRKDIAAGY</sequence>
<name>PUR2_CALS4</name>
<proteinExistence type="inferred from homology"/>
<organism>
    <name type="scientific">Caldanaerobacter subterraneus subsp. tengcongensis (strain DSM 15242 / JCM 11007 / NBRC 100824 / MB4)</name>
    <name type="common">Thermoanaerobacter tengcongensis</name>
    <dbReference type="NCBI Taxonomy" id="273068"/>
    <lineage>
        <taxon>Bacteria</taxon>
        <taxon>Bacillati</taxon>
        <taxon>Bacillota</taxon>
        <taxon>Clostridia</taxon>
        <taxon>Thermoanaerobacterales</taxon>
        <taxon>Thermoanaerobacteraceae</taxon>
        <taxon>Caldanaerobacter</taxon>
    </lineage>
</organism>
<keyword id="KW-0067">ATP-binding</keyword>
<keyword id="KW-0436">Ligase</keyword>
<keyword id="KW-0460">Magnesium</keyword>
<keyword id="KW-0464">Manganese</keyword>
<keyword id="KW-0479">Metal-binding</keyword>
<keyword id="KW-0547">Nucleotide-binding</keyword>
<keyword id="KW-0658">Purine biosynthesis</keyword>
<keyword id="KW-1185">Reference proteome</keyword>
<feature type="chain" id="PRO_0000151496" description="Phosphoribosylamine--glycine ligase">
    <location>
        <begin position="1"/>
        <end position="417"/>
    </location>
</feature>
<feature type="domain" description="ATP-grasp" evidence="2">
    <location>
        <begin position="107"/>
        <end position="313"/>
    </location>
</feature>
<feature type="binding site" evidence="2">
    <location>
        <begin position="133"/>
        <end position="194"/>
    </location>
    <ligand>
        <name>ATP</name>
        <dbReference type="ChEBI" id="CHEBI:30616"/>
    </ligand>
</feature>
<feature type="binding site" evidence="2">
    <location>
        <position position="283"/>
    </location>
    <ligand>
        <name>Mg(2+)</name>
        <dbReference type="ChEBI" id="CHEBI:18420"/>
    </ligand>
</feature>
<feature type="binding site" evidence="2">
    <location>
        <position position="285"/>
    </location>
    <ligand>
        <name>Mg(2+)</name>
        <dbReference type="ChEBI" id="CHEBI:18420"/>
    </ligand>
</feature>
<reference key="1">
    <citation type="journal article" date="2002" name="Genome Res.">
        <title>A complete sequence of the T. tengcongensis genome.</title>
        <authorList>
            <person name="Bao Q."/>
            <person name="Tian Y."/>
            <person name="Li W."/>
            <person name="Xu Z."/>
            <person name="Xuan Z."/>
            <person name="Hu S."/>
            <person name="Dong W."/>
            <person name="Yang J."/>
            <person name="Chen Y."/>
            <person name="Xue Y."/>
            <person name="Xu Y."/>
            <person name="Lai X."/>
            <person name="Huang L."/>
            <person name="Dong X."/>
            <person name="Ma Y."/>
            <person name="Ling L."/>
            <person name="Tan H."/>
            <person name="Chen R."/>
            <person name="Wang J."/>
            <person name="Yu J."/>
            <person name="Yang H."/>
        </authorList>
    </citation>
    <scope>NUCLEOTIDE SEQUENCE [LARGE SCALE GENOMIC DNA]</scope>
    <source>
        <strain>DSM 15242 / JCM 11007 / NBRC 100824 / MB4</strain>
    </source>
</reference>
<dbReference type="EC" id="6.3.4.13" evidence="2"/>
<dbReference type="EMBL" id="AE008691">
    <property type="protein sequence ID" value="AAM23863.1"/>
    <property type="molecule type" value="Genomic_DNA"/>
</dbReference>
<dbReference type="RefSeq" id="WP_011025008.1">
    <property type="nucleotide sequence ID" value="NC_003869.1"/>
</dbReference>
<dbReference type="SMR" id="Q8RC54"/>
<dbReference type="STRING" id="273068.TTE0593"/>
<dbReference type="KEGG" id="tte:TTE0593"/>
<dbReference type="eggNOG" id="COG0151">
    <property type="taxonomic scope" value="Bacteria"/>
</dbReference>
<dbReference type="HOGENOM" id="CLU_027420_3_1_9"/>
<dbReference type="OrthoDB" id="9807240at2"/>
<dbReference type="UniPathway" id="UPA00074">
    <property type="reaction ID" value="UER00125"/>
</dbReference>
<dbReference type="Proteomes" id="UP000000555">
    <property type="component" value="Chromosome"/>
</dbReference>
<dbReference type="GO" id="GO:0005524">
    <property type="term" value="F:ATP binding"/>
    <property type="evidence" value="ECO:0007669"/>
    <property type="project" value="UniProtKB-KW"/>
</dbReference>
<dbReference type="GO" id="GO:0046872">
    <property type="term" value="F:metal ion binding"/>
    <property type="evidence" value="ECO:0007669"/>
    <property type="project" value="UniProtKB-KW"/>
</dbReference>
<dbReference type="GO" id="GO:0004637">
    <property type="term" value="F:phosphoribosylamine-glycine ligase activity"/>
    <property type="evidence" value="ECO:0007669"/>
    <property type="project" value="UniProtKB-UniRule"/>
</dbReference>
<dbReference type="GO" id="GO:0006189">
    <property type="term" value="P:'de novo' IMP biosynthetic process"/>
    <property type="evidence" value="ECO:0007669"/>
    <property type="project" value="UniProtKB-UniRule"/>
</dbReference>
<dbReference type="GO" id="GO:0009113">
    <property type="term" value="P:purine nucleobase biosynthetic process"/>
    <property type="evidence" value="ECO:0007669"/>
    <property type="project" value="InterPro"/>
</dbReference>
<dbReference type="FunFam" id="3.40.50.20:FF:000006">
    <property type="entry name" value="Phosphoribosylamine--glycine ligase, chloroplastic"/>
    <property type="match status" value="1"/>
</dbReference>
<dbReference type="FunFam" id="3.30.470.20:FF:000018">
    <property type="entry name" value="Trifunctional purine biosynthetic protein adenosine-3"/>
    <property type="match status" value="1"/>
</dbReference>
<dbReference type="FunFam" id="3.90.600.10:FF:000001">
    <property type="entry name" value="Trifunctional purine biosynthetic protein adenosine-3"/>
    <property type="match status" value="1"/>
</dbReference>
<dbReference type="Gene3D" id="3.40.50.20">
    <property type="match status" value="1"/>
</dbReference>
<dbReference type="Gene3D" id="3.30.1490.20">
    <property type="entry name" value="ATP-grasp fold, A domain"/>
    <property type="match status" value="1"/>
</dbReference>
<dbReference type="Gene3D" id="3.30.470.20">
    <property type="entry name" value="ATP-grasp fold, B domain"/>
    <property type="match status" value="1"/>
</dbReference>
<dbReference type="Gene3D" id="3.90.600.10">
    <property type="entry name" value="Phosphoribosylglycinamide synthetase, C-terminal domain"/>
    <property type="match status" value="1"/>
</dbReference>
<dbReference type="HAMAP" id="MF_00138">
    <property type="entry name" value="GARS"/>
    <property type="match status" value="1"/>
</dbReference>
<dbReference type="InterPro" id="IPR011761">
    <property type="entry name" value="ATP-grasp"/>
</dbReference>
<dbReference type="InterPro" id="IPR013815">
    <property type="entry name" value="ATP_grasp_subdomain_1"/>
</dbReference>
<dbReference type="InterPro" id="IPR016185">
    <property type="entry name" value="PreATP-grasp_dom_sf"/>
</dbReference>
<dbReference type="InterPro" id="IPR020561">
    <property type="entry name" value="PRibGlycinamid_synth_ATP-grasp"/>
</dbReference>
<dbReference type="InterPro" id="IPR000115">
    <property type="entry name" value="PRibGlycinamide_synth"/>
</dbReference>
<dbReference type="InterPro" id="IPR020560">
    <property type="entry name" value="PRibGlycinamide_synth_C-dom"/>
</dbReference>
<dbReference type="InterPro" id="IPR037123">
    <property type="entry name" value="PRibGlycinamide_synth_C_sf"/>
</dbReference>
<dbReference type="InterPro" id="IPR020559">
    <property type="entry name" value="PRibGlycinamide_synth_CS"/>
</dbReference>
<dbReference type="InterPro" id="IPR020562">
    <property type="entry name" value="PRibGlycinamide_synth_N"/>
</dbReference>
<dbReference type="InterPro" id="IPR011054">
    <property type="entry name" value="Rudment_hybrid_motif"/>
</dbReference>
<dbReference type="NCBIfam" id="TIGR00877">
    <property type="entry name" value="purD"/>
    <property type="match status" value="1"/>
</dbReference>
<dbReference type="PANTHER" id="PTHR43472">
    <property type="entry name" value="PHOSPHORIBOSYLAMINE--GLYCINE LIGASE"/>
    <property type="match status" value="1"/>
</dbReference>
<dbReference type="PANTHER" id="PTHR43472:SF1">
    <property type="entry name" value="PHOSPHORIBOSYLAMINE--GLYCINE LIGASE, CHLOROPLASTIC"/>
    <property type="match status" value="1"/>
</dbReference>
<dbReference type="Pfam" id="PF01071">
    <property type="entry name" value="GARS_A"/>
    <property type="match status" value="1"/>
</dbReference>
<dbReference type="Pfam" id="PF02843">
    <property type="entry name" value="GARS_C"/>
    <property type="match status" value="1"/>
</dbReference>
<dbReference type="Pfam" id="PF02844">
    <property type="entry name" value="GARS_N"/>
    <property type="match status" value="1"/>
</dbReference>
<dbReference type="SMART" id="SM01209">
    <property type="entry name" value="GARS_A"/>
    <property type="match status" value="1"/>
</dbReference>
<dbReference type="SMART" id="SM01210">
    <property type="entry name" value="GARS_C"/>
    <property type="match status" value="1"/>
</dbReference>
<dbReference type="SUPFAM" id="SSF56059">
    <property type="entry name" value="Glutathione synthetase ATP-binding domain-like"/>
    <property type="match status" value="1"/>
</dbReference>
<dbReference type="SUPFAM" id="SSF52440">
    <property type="entry name" value="PreATP-grasp domain"/>
    <property type="match status" value="1"/>
</dbReference>
<dbReference type="SUPFAM" id="SSF51246">
    <property type="entry name" value="Rudiment single hybrid motif"/>
    <property type="match status" value="1"/>
</dbReference>
<dbReference type="PROSITE" id="PS50975">
    <property type="entry name" value="ATP_GRASP"/>
    <property type="match status" value="1"/>
</dbReference>
<dbReference type="PROSITE" id="PS00184">
    <property type="entry name" value="GARS"/>
    <property type="match status" value="1"/>
</dbReference>
<accession>Q8RC54</accession>
<gene>
    <name evidence="2" type="primary">purD</name>
    <name type="ordered locus">TTE0593</name>
</gene>